<gene>
    <name evidence="1" type="primary">nqrF</name>
    <name type="ordered locus">APL_0155</name>
</gene>
<accession>A3MYM7</accession>
<protein>
    <recommendedName>
        <fullName evidence="1">Na(+)-translocating NADH-quinone reductase subunit F</fullName>
        <shortName evidence="1">Na(+)-NQR subunit F</shortName>
        <shortName evidence="1">Na(+)-translocating NQR subunit F</shortName>
        <ecNumber evidence="1">7.2.1.1</ecNumber>
    </recommendedName>
    <alternativeName>
        <fullName evidence="1">NQR complex subunit F</fullName>
    </alternativeName>
    <alternativeName>
        <fullName evidence="1">NQR-1 subunit F</fullName>
    </alternativeName>
</protein>
<sequence length="409" mass="45509">MDSNFIFGIIAFTALVLVLAVIILFAKSKLVDSGDITISINNDPEKGITLPAGGKLLGALASKGIFVSSACGGGGSCGQCKVQVKSGGGEILPTELSHISKKEAKEGWRLACQVNVKSSMDVELPEEIFGVKKWECTVISNDNKATFIKELKLQIPEGEEVPFRAGGYIQIEADPHTVNYKDFDIPKEYHEDWDKFNLWRYVSKVDEHIIRAYSMASYPEEKGIIMLNVRIATPPPRNPDVPPGQMSSYIWSLKPGDKVTISGPFGEFFAKETDNEMVFIGGGAGMAPMRSHIFDQLKRLKSKRKMSFWYGARSKREIFYQEDFDQLAAENDNFVWHVALSDALPEDNWTGYTGFIHNVLYENYLKNHEAPEDCEYYMCGPPVMNAAVIGMLKSLGVEDENILLDDFGG</sequence>
<reference key="1">
    <citation type="journal article" date="2008" name="J. Bacteriol.">
        <title>The complete genome sequence of Actinobacillus pleuropneumoniae L20 (serotype 5b).</title>
        <authorList>
            <person name="Foote S.J."/>
            <person name="Bosse J.T."/>
            <person name="Bouevitch A.B."/>
            <person name="Langford P.R."/>
            <person name="Young N.M."/>
            <person name="Nash J.H.E."/>
        </authorList>
    </citation>
    <scope>NUCLEOTIDE SEQUENCE [LARGE SCALE GENOMIC DNA]</scope>
    <source>
        <strain>L20</strain>
    </source>
</reference>
<proteinExistence type="inferred from homology"/>
<keyword id="KW-0001">2Fe-2S</keyword>
<keyword id="KW-0997">Cell inner membrane</keyword>
<keyword id="KW-1003">Cell membrane</keyword>
<keyword id="KW-0274">FAD</keyword>
<keyword id="KW-0285">Flavoprotein</keyword>
<keyword id="KW-0406">Ion transport</keyword>
<keyword id="KW-0408">Iron</keyword>
<keyword id="KW-0411">Iron-sulfur</keyword>
<keyword id="KW-0472">Membrane</keyword>
<keyword id="KW-0479">Metal-binding</keyword>
<keyword id="KW-0520">NAD</keyword>
<keyword id="KW-1185">Reference proteome</keyword>
<keyword id="KW-0915">Sodium</keyword>
<keyword id="KW-0739">Sodium transport</keyword>
<keyword id="KW-1278">Translocase</keyword>
<keyword id="KW-0812">Transmembrane</keyword>
<keyword id="KW-1133">Transmembrane helix</keyword>
<keyword id="KW-0813">Transport</keyword>
<keyword id="KW-0830">Ubiquinone</keyword>
<organism>
    <name type="scientific">Actinobacillus pleuropneumoniae serotype 5b (strain L20)</name>
    <dbReference type="NCBI Taxonomy" id="416269"/>
    <lineage>
        <taxon>Bacteria</taxon>
        <taxon>Pseudomonadati</taxon>
        <taxon>Pseudomonadota</taxon>
        <taxon>Gammaproteobacteria</taxon>
        <taxon>Pasteurellales</taxon>
        <taxon>Pasteurellaceae</taxon>
        <taxon>Actinobacillus</taxon>
    </lineage>
</organism>
<feature type="chain" id="PRO_1000080572" description="Na(+)-translocating NADH-quinone reductase subunit F">
    <location>
        <begin position="1"/>
        <end position="409"/>
    </location>
</feature>
<feature type="transmembrane region" description="Helical" evidence="1">
    <location>
        <begin position="5"/>
        <end position="25"/>
    </location>
</feature>
<feature type="domain" description="2Fe-2S ferredoxin-type" evidence="1">
    <location>
        <begin position="34"/>
        <end position="128"/>
    </location>
</feature>
<feature type="domain" description="FAD-binding FR-type" evidence="1">
    <location>
        <begin position="131"/>
        <end position="271"/>
    </location>
</feature>
<feature type="binding site" evidence="1">
    <location>
        <position position="71"/>
    </location>
    <ligand>
        <name>[2Fe-2S] cluster</name>
        <dbReference type="ChEBI" id="CHEBI:190135"/>
    </ligand>
</feature>
<feature type="binding site" evidence="1">
    <location>
        <position position="77"/>
    </location>
    <ligand>
        <name>[2Fe-2S] cluster</name>
        <dbReference type="ChEBI" id="CHEBI:190135"/>
    </ligand>
</feature>
<feature type="binding site" evidence="1">
    <location>
        <position position="80"/>
    </location>
    <ligand>
        <name>[2Fe-2S] cluster</name>
        <dbReference type="ChEBI" id="CHEBI:190135"/>
    </ligand>
</feature>
<feature type="binding site" evidence="1">
    <location>
        <position position="112"/>
    </location>
    <ligand>
        <name>[2Fe-2S] cluster</name>
        <dbReference type="ChEBI" id="CHEBI:190135"/>
    </ligand>
</feature>
<name>NQRF_ACTP2</name>
<evidence type="ECO:0000255" key="1">
    <source>
        <dbReference type="HAMAP-Rule" id="MF_00430"/>
    </source>
</evidence>
<dbReference type="EC" id="7.2.1.1" evidence="1"/>
<dbReference type="EMBL" id="CP000569">
    <property type="protein sequence ID" value="ABN73263.1"/>
    <property type="molecule type" value="Genomic_DNA"/>
</dbReference>
<dbReference type="RefSeq" id="WP_005595870.1">
    <property type="nucleotide sequence ID" value="NC_009053.1"/>
</dbReference>
<dbReference type="SMR" id="A3MYM7"/>
<dbReference type="STRING" id="416269.APL_0155"/>
<dbReference type="EnsemblBacteria" id="ABN73263">
    <property type="protein sequence ID" value="ABN73263"/>
    <property type="gene ID" value="APL_0155"/>
</dbReference>
<dbReference type="GeneID" id="48598302"/>
<dbReference type="KEGG" id="apl:APL_0155"/>
<dbReference type="eggNOG" id="COG2871">
    <property type="taxonomic scope" value="Bacteria"/>
</dbReference>
<dbReference type="HOGENOM" id="CLU_003827_7_2_6"/>
<dbReference type="Proteomes" id="UP000001432">
    <property type="component" value="Chromosome"/>
</dbReference>
<dbReference type="GO" id="GO:0005886">
    <property type="term" value="C:plasma membrane"/>
    <property type="evidence" value="ECO:0007669"/>
    <property type="project" value="UniProtKB-SubCell"/>
</dbReference>
<dbReference type="GO" id="GO:0051537">
    <property type="term" value="F:2 iron, 2 sulfur cluster binding"/>
    <property type="evidence" value="ECO:0007669"/>
    <property type="project" value="UniProtKB-KW"/>
</dbReference>
<dbReference type="GO" id="GO:0009055">
    <property type="term" value="F:electron transfer activity"/>
    <property type="evidence" value="ECO:0007669"/>
    <property type="project" value="UniProtKB-UniRule"/>
</dbReference>
<dbReference type="GO" id="GO:0046872">
    <property type="term" value="F:metal ion binding"/>
    <property type="evidence" value="ECO:0007669"/>
    <property type="project" value="UniProtKB-KW"/>
</dbReference>
<dbReference type="GO" id="GO:0016655">
    <property type="term" value="F:oxidoreductase activity, acting on NAD(P)H, quinone or similar compound as acceptor"/>
    <property type="evidence" value="ECO:0007669"/>
    <property type="project" value="InterPro"/>
</dbReference>
<dbReference type="GO" id="GO:0006814">
    <property type="term" value="P:sodium ion transport"/>
    <property type="evidence" value="ECO:0007669"/>
    <property type="project" value="UniProtKB-UniRule"/>
</dbReference>
<dbReference type="CDD" id="cd06188">
    <property type="entry name" value="NADH_quinone_reductase"/>
    <property type="match status" value="1"/>
</dbReference>
<dbReference type="FunFam" id="2.40.30.10:FF:000064">
    <property type="entry name" value="Na(+)-translocating NADH-quinone reductase subunit F"/>
    <property type="match status" value="1"/>
</dbReference>
<dbReference type="FunFam" id="3.40.50.80:FF:000014">
    <property type="entry name" value="Na(+)-translocating NADH-quinone reductase subunit F"/>
    <property type="match status" value="1"/>
</dbReference>
<dbReference type="Gene3D" id="3.10.20.30">
    <property type="match status" value="1"/>
</dbReference>
<dbReference type="Gene3D" id="3.40.50.80">
    <property type="entry name" value="Nucleotide-binding domain of ferredoxin-NADP reductase (FNR) module"/>
    <property type="match status" value="1"/>
</dbReference>
<dbReference type="Gene3D" id="2.40.30.10">
    <property type="entry name" value="Translation factors"/>
    <property type="match status" value="1"/>
</dbReference>
<dbReference type="HAMAP" id="MF_00430">
    <property type="entry name" value="NqrF"/>
    <property type="match status" value="1"/>
</dbReference>
<dbReference type="InterPro" id="IPR036010">
    <property type="entry name" value="2Fe-2S_ferredoxin-like_sf"/>
</dbReference>
<dbReference type="InterPro" id="IPR001041">
    <property type="entry name" value="2Fe-2S_ferredoxin-type"/>
</dbReference>
<dbReference type="InterPro" id="IPR012675">
    <property type="entry name" value="Beta-grasp_dom_sf"/>
</dbReference>
<dbReference type="InterPro" id="IPR008333">
    <property type="entry name" value="Cbr1-like_FAD-bd_dom"/>
</dbReference>
<dbReference type="InterPro" id="IPR017927">
    <property type="entry name" value="FAD-bd_FR_type"/>
</dbReference>
<dbReference type="InterPro" id="IPR001709">
    <property type="entry name" value="Flavoprot_Pyr_Nucl_cyt_Rdtase"/>
</dbReference>
<dbReference type="InterPro" id="IPR039261">
    <property type="entry name" value="FNR_nucleotide-bd"/>
</dbReference>
<dbReference type="InterPro" id="IPR010205">
    <property type="entry name" value="NqrF"/>
</dbReference>
<dbReference type="InterPro" id="IPR001433">
    <property type="entry name" value="OxRdtase_FAD/NAD-bd"/>
</dbReference>
<dbReference type="InterPro" id="IPR017938">
    <property type="entry name" value="Riboflavin_synthase-like_b-brl"/>
</dbReference>
<dbReference type="NCBIfam" id="TIGR01941">
    <property type="entry name" value="nqrF"/>
    <property type="match status" value="1"/>
</dbReference>
<dbReference type="PANTHER" id="PTHR43644">
    <property type="entry name" value="NA(+)-TRANSLOCATING NADH-QUINONE REDUCTASE SUBUNIT"/>
    <property type="match status" value="1"/>
</dbReference>
<dbReference type="PANTHER" id="PTHR43644:SF1">
    <property type="entry name" value="NAD(P)H-FLAVIN REDUCTASE"/>
    <property type="match status" value="1"/>
</dbReference>
<dbReference type="Pfam" id="PF00970">
    <property type="entry name" value="FAD_binding_6"/>
    <property type="match status" value="1"/>
</dbReference>
<dbReference type="Pfam" id="PF00111">
    <property type="entry name" value="Fer2"/>
    <property type="match status" value="1"/>
</dbReference>
<dbReference type="Pfam" id="PF00175">
    <property type="entry name" value="NAD_binding_1"/>
    <property type="match status" value="1"/>
</dbReference>
<dbReference type="PIRSF" id="PIRSF000044">
    <property type="entry name" value="Cis_Diol_DH_RD"/>
    <property type="match status" value="1"/>
</dbReference>
<dbReference type="PRINTS" id="PR00371">
    <property type="entry name" value="FPNCR"/>
</dbReference>
<dbReference type="SUPFAM" id="SSF54292">
    <property type="entry name" value="2Fe-2S ferredoxin-like"/>
    <property type="match status" value="1"/>
</dbReference>
<dbReference type="SUPFAM" id="SSF52343">
    <property type="entry name" value="Ferredoxin reductase-like, C-terminal NADP-linked domain"/>
    <property type="match status" value="1"/>
</dbReference>
<dbReference type="SUPFAM" id="SSF63380">
    <property type="entry name" value="Riboflavin synthase domain-like"/>
    <property type="match status" value="1"/>
</dbReference>
<dbReference type="PROSITE" id="PS51085">
    <property type="entry name" value="2FE2S_FER_2"/>
    <property type="match status" value="1"/>
</dbReference>
<dbReference type="PROSITE" id="PS51384">
    <property type="entry name" value="FAD_FR"/>
    <property type="match status" value="1"/>
</dbReference>
<comment type="function">
    <text evidence="1">NQR complex catalyzes the reduction of ubiquinone-1 to ubiquinol by two successive reactions, coupled with the transport of Na(+) ions from the cytoplasm to the periplasm. The first step is catalyzed by NqrF, which accepts electrons from NADH and reduces ubiquinone-1 to ubisemiquinone by a one-electron transfer pathway.</text>
</comment>
<comment type="catalytic activity">
    <reaction evidence="1">
        <text>a ubiquinone + n Na(+)(in) + NADH + H(+) = a ubiquinol + n Na(+)(out) + NAD(+)</text>
        <dbReference type="Rhea" id="RHEA:47748"/>
        <dbReference type="Rhea" id="RHEA-COMP:9565"/>
        <dbReference type="Rhea" id="RHEA-COMP:9566"/>
        <dbReference type="ChEBI" id="CHEBI:15378"/>
        <dbReference type="ChEBI" id="CHEBI:16389"/>
        <dbReference type="ChEBI" id="CHEBI:17976"/>
        <dbReference type="ChEBI" id="CHEBI:29101"/>
        <dbReference type="ChEBI" id="CHEBI:57540"/>
        <dbReference type="ChEBI" id="CHEBI:57945"/>
        <dbReference type="EC" id="7.2.1.1"/>
    </reaction>
</comment>
<comment type="cofactor">
    <cofactor evidence="1">
        <name>[2Fe-2S] cluster</name>
        <dbReference type="ChEBI" id="CHEBI:190135"/>
    </cofactor>
    <text evidence="1">Binds 1 [2Fe-2S] cluster.</text>
</comment>
<comment type="cofactor">
    <cofactor evidence="1">
        <name>FAD</name>
        <dbReference type="ChEBI" id="CHEBI:57692"/>
    </cofactor>
</comment>
<comment type="subunit">
    <text evidence="1">Composed of six subunits; NqrA, NqrB, NqrC, NqrD, NqrE and NqrF.</text>
</comment>
<comment type="subcellular location">
    <subcellularLocation>
        <location evidence="1">Cell inner membrane</location>
        <topology evidence="1">Single-pass membrane protein</topology>
    </subcellularLocation>
</comment>
<comment type="similarity">
    <text evidence="1">Belongs to the NqrF family.</text>
</comment>